<name>HEM1_DICNV</name>
<dbReference type="EC" id="1.2.1.70" evidence="1"/>
<dbReference type="EMBL" id="CP000513">
    <property type="protein sequence ID" value="ABQ13699.1"/>
    <property type="molecule type" value="Genomic_DNA"/>
</dbReference>
<dbReference type="RefSeq" id="WP_011927821.1">
    <property type="nucleotide sequence ID" value="NC_009446.1"/>
</dbReference>
<dbReference type="SMR" id="A5EWV4"/>
<dbReference type="STRING" id="246195.DNO_0069"/>
<dbReference type="KEGG" id="dno:DNO_0069"/>
<dbReference type="eggNOG" id="COG0373">
    <property type="taxonomic scope" value="Bacteria"/>
</dbReference>
<dbReference type="HOGENOM" id="CLU_035113_2_2_6"/>
<dbReference type="OrthoDB" id="110209at2"/>
<dbReference type="UniPathway" id="UPA00251">
    <property type="reaction ID" value="UER00316"/>
</dbReference>
<dbReference type="Proteomes" id="UP000000248">
    <property type="component" value="Chromosome"/>
</dbReference>
<dbReference type="GO" id="GO:0008883">
    <property type="term" value="F:glutamyl-tRNA reductase activity"/>
    <property type="evidence" value="ECO:0007669"/>
    <property type="project" value="UniProtKB-UniRule"/>
</dbReference>
<dbReference type="GO" id="GO:0050661">
    <property type="term" value="F:NADP binding"/>
    <property type="evidence" value="ECO:0007669"/>
    <property type="project" value="InterPro"/>
</dbReference>
<dbReference type="GO" id="GO:0019353">
    <property type="term" value="P:protoporphyrinogen IX biosynthetic process from glutamate"/>
    <property type="evidence" value="ECO:0007669"/>
    <property type="project" value="TreeGrafter"/>
</dbReference>
<dbReference type="CDD" id="cd05213">
    <property type="entry name" value="NAD_bind_Glutamyl_tRNA_reduct"/>
    <property type="match status" value="1"/>
</dbReference>
<dbReference type="FunFam" id="3.30.460.30:FF:000001">
    <property type="entry name" value="Glutamyl-tRNA reductase"/>
    <property type="match status" value="1"/>
</dbReference>
<dbReference type="FunFam" id="3.40.50.720:FF:000031">
    <property type="entry name" value="Glutamyl-tRNA reductase"/>
    <property type="match status" value="1"/>
</dbReference>
<dbReference type="Gene3D" id="3.30.460.30">
    <property type="entry name" value="Glutamyl-tRNA reductase, N-terminal domain"/>
    <property type="match status" value="1"/>
</dbReference>
<dbReference type="Gene3D" id="3.40.50.720">
    <property type="entry name" value="NAD(P)-binding Rossmann-like Domain"/>
    <property type="match status" value="1"/>
</dbReference>
<dbReference type="HAMAP" id="MF_00087">
    <property type="entry name" value="Glu_tRNA_reductase"/>
    <property type="match status" value="1"/>
</dbReference>
<dbReference type="InterPro" id="IPR000343">
    <property type="entry name" value="4pyrrol_synth_GluRdtase"/>
</dbReference>
<dbReference type="InterPro" id="IPR015896">
    <property type="entry name" value="4pyrrol_synth_GluRdtase_dimer"/>
</dbReference>
<dbReference type="InterPro" id="IPR015895">
    <property type="entry name" value="4pyrrol_synth_GluRdtase_N"/>
</dbReference>
<dbReference type="InterPro" id="IPR018214">
    <property type="entry name" value="GluRdtase_CS"/>
</dbReference>
<dbReference type="InterPro" id="IPR036453">
    <property type="entry name" value="GluRdtase_dimer_dom_sf"/>
</dbReference>
<dbReference type="InterPro" id="IPR036343">
    <property type="entry name" value="GluRdtase_N_sf"/>
</dbReference>
<dbReference type="InterPro" id="IPR036291">
    <property type="entry name" value="NAD(P)-bd_dom_sf"/>
</dbReference>
<dbReference type="InterPro" id="IPR006151">
    <property type="entry name" value="Shikm_DH/Glu-tRNA_Rdtase"/>
</dbReference>
<dbReference type="NCBIfam" id="TIGR01035">
    <property type="entry name" value="hemA"/>
    <property type="match status" value="1"/>
</dbReference>
<dbReference type="PANTHER" id="PTHR43013">
    <property type="entry name" value="GLUTAMYL-TRNA REDUCTASE"/>
    <property type="match status" value="1"/>
</dbReference>
<dbReference type="PANTHER" id="PTHR43013:SF1">
    <property type="entry name" value="GLUTAMYL-TRNA REDUCTASE"/>
    <property type="match status" value="1"/>
</dbReference>
<dbReference type="Pfam" id="PF00745">
    <property type="entry name" value="GlutR_dimer"/>
    <property type="match status" value="1"/>
</dbReference>
<dbReference type="Pfam" id="PF05201">
    <property type="entry name" value="GlutR_N"/>
    <property type="match status" value="1"/>
</dbReference>
<dbReference type="Pfam" id="PF01488">
    <property type="entry name" value="Shikimate_DH"/>
    <property type="match status" value="1"/>
</dbReference>
<dbReference type="PIRSF" id="PIRSF000445">
    <property type="entry name" value="4pyrrol_synth_GluRdtase"/>
    <property type="match status" value="1"/>
</dbReference>
<dbReference type="SUPFAM" id="SSF69742">
    <property type="entry name" value="Glutamyl tRNA-reductase catalytic, N-terminal domain"/>
    <property type="match status" value="1"/>
</dbReference>
<dbReference type="SUPFAM" id="SSF69075">
    <property type="entry name" value="Glutamyl tRNA-reductase dimerization domain"/>
    <property type="match status" value="1"/>
</dbReference>
<dbReference type="SUPFAM" id="SSF51735">
    <property type="entry name" value="NAD(P)-binding Rossmann-fold domains"/>
    <property type="match status" value="1"/>
</dbReference>
<dbReference type="PROSITE" id="PS00747">
    <property type="entry name" value="GLUTR"/>
    <property type="match status" value="1"/>
</dbReference>
<comment type="function">
    <text evidence="1">Catalyzes the NADPH-dependent reduction of glutamyl-tRNA(Glu) to glutamate 1-semialdehyde (GSA).</text>
</comment>
<comment type="catalytic activity">
    <reaction evidence="1">
        <text>(S)-4-amino-5-oxopentanoate + tRNA(Glu) + NADP(+) = L-glutamyl-tRNA(Glu) + NADPH + H(+)</text>
        <dbReference type="Rhea" id="RHEA:12344"/>
        <dbReference type="Rhea" id="RHEA-COMP:9663"/>
        <dbReference type="Rhea" id="RHEA-COMP:9680"/>
        <dbReference type="ChEBI" id="CHEBI:15378"/>
        <dbReference type="ChEBI" id="CHEBI:57501"/>
        <dbReference type="ChEBI" id="CHEBI:57783"/>
        <dbReference type="ChEBI" id="CHEBI:58349"/>
        <dbReference type="ChEBI" id="CHEBI:78442"/>
        <dbReference type="ChEBI" id="CHEBI:78520"/>
        <dbReference type="EC" id="1.2.1.70"/>
    </reaction>
</comment>
<comment type="pathway">
    <text evidence="1">Porphyrin-containing compound metabolism; protoporphyrin-IX biosynthesis; 5-aminolevulinate from L-glutamyl-tRNA(Glu): step 1/2.</text>
</comment>
<comment type="subunit">
    <text evidence="1">Homodimer.</text>
</comment>
<comment type="domain">
    <text evidence="1">Possesses an unusual extended V-shaped dimeric structure with each monomer consisting of three distinct domains arranged along a curved 'spinal' alpha-helix. The N-terminal catalytic domain specifically recognizes the glutamate moiety of the substrate. The second domain is the NADPH-binding domain, and the third C-terminal domain is responsible for dimerization.</text>
</comment>
<comment type="miscellaneous">
    <text evidence="1">During catalysis, the active site Cys acts as a nucleophile attacking the alpha-carbonyl group of tRNA-bound glutamate with the formation of a thioester intermediate between enzyme and glutamate, and the concomitant release of tRNA(Glu). The thioester intermediate is finally reduced by direct hydride transfer from NADPH, to form the product GSA.</text>
</comment>
<comment type="similarity">
    <text evidence="1">Belongs to the glutamyl-tRNA reductase family.</text>
</comment>
<gene>
    <name evidence="1" type="primary">hemA</name>
    <name type="ordered locus">DNO_0069</name>
</gene>
<reference key="1">
    <citation type="journal article" date="2007" name="Nat. Biotechnol.">
        <title>Genome sequence and identification of candidate vaccine antigens from the animal pathogen Dichelobacter nodosus.</title>
        <authorList>
            <person name="Myers G.S.A."/>
            <person name="Parker D."/>
            <person name="Al-Hasani K."/>
            <person name="Kennan R.M."/>
            <person name="Seemann T."/>
            <person name="Ren Q."/>
            <person name="Badger J.H."/>
            <person name="Selengut J.D."/>
            <person name="Deboy R.T."/>
            <person name="Tettelin H."/>
            <person name="Boyce J.D."/>
            <person name="McCarl V.P."/>
            <person name="Han X."/>
            <person name="Nelson W.C."/>
            <person name="Madupu R."/>
            <person name="Mohamoud Y."/>
            <person name="Holley T."/>
            <person name="Fedorova N."/>
            <person name="Khouri H."/>
            <person name="Bottomley S.P."/>
            <person name="Whittington R.J."/>
            <person name="Adler B."/>
            <person name="Songer J.G."/>
            <person name="Rood J.I."/>
            <person name="Paulsen I.T."/>
        </authorList>
    </citation>
    <scope>NUCLEOTIDE SEQUENCE [LARGE SCALE GENOMIC DNA]</scope>
    <source>
        <strain>VCS1703A</strain>
    </source>
</reference>
<keyword id="KW-0521">NADP</keyword>
<keyword id="KW-0560">Oxidoreductase</keyword>
<keyword id="KW-0627">Porphyrin biosynthesis</keyword>
<keyword id="KW-1185">Reference proteome</keyword>
<proteinExistence type="inferred from homology"/>
<feature type="chain" id="PRO_0000335028" description="Glutamyl-tRNA reductase">
    <location>
        <begin position="1"/>
        <end position="418"/>
    </location>
</feature>
<feature type="active site" description="Nucleophile" evidence="1">
    <location>
        <position position="52"/>
    </location>
</feature>
<feature type="binding site" evidence="1">
    <location>
        <begin position="51"/>
        <end position="54"/>
    </location>
    <ligand>
        <name>substrate</name>
    </ligand>
</feature>
<feature type="binding site" evidence="1">
    <location>
        <position position="107"/>
    </location>
    <ligand>
        <name>substrate</name>
    </ligand>
</feature>
<feature type="binding site" evidence="1">
    <location>
        <begin position="112"/>
        <end position="114"/>
    </location>
    <ligand>
        <name>substrate</name>
    </ligand>
</feature>
<feature type="binding site" evidence="1">
    <location>
        <position position="118"/>
    </location>
    <ligand>
        <name>substrate</name>
    </ligand>
</feature>
<feature type="binding site" evidence="1">
    <location>
        <begin position="187"/>
        <end position="192"/>
    </location>
    <ligand>
        <name>NADP(+)</name>
        <dbReference type="ChEBI" id="CHEBI:58349"/>
    </ligand>
</feature>
<feature type="site" description="Important for activity" evidence="1">
    <location>
        <position position="97"/>
    </location>
</feature>
<sequence>MHNTIYVLGFRHQTTPASVREKLAFSPENILNTLPFLQAQCAGAEILLLSTCNRSEWYFASNTPPRLEEWLYQHTAISSEELKRHLFIYTDREAVQHLYRVACGLDSLILGEPQILGQLKAAYRLAKKAGSIGSWLERLFQHSFALAKHVRHQTDIGKNPVSVAYAGVQLTHQFFDDYSKRTAIIVGAGETAQLVARYLHDLKIKRLIIANRTLNRAQQLAESVGGYALSLPQLADHLHEADMIFGCARADVFLVTQNMAITALQRRQNTLQVYIDLGIPHNFDRNIDNKENAFLYDMDNLAQLIDKNRETRQKAAAEAETFIRLYSNDFLNWTQEKPQQHMIRHIRADAHNIRQKLLIMAYRQLAQGADPEKVLAEMSYKLTNKLLHQPCALIHAIPPDHKDWLAVVADTFNAELPK</sequence>
<protein>
    <recommendedName>
        <fullName evidence="1">Glutamyl-tRNA reductase</fullName>
        <shortName evidence="1">GluTR</shortName>
        <ecNumber evidence="1">1.2.1.70</ecNumber>
    </recommendedName>
</protein>
<accession>A5EWV4</accession>
<organism>
    <name type="scientific">Dichelobacter nodosus (strain VCS1703A)</name>
    <dbReference type="NCBI Taxonomy" id="246195"/>
    <lineage>
        <taxon>Bacteria</taxon>
        <taxon>Pseudomonadati</taxon>
        <taxon>Pseudomonadota</taxon>
        <taxon>Gammaproteobacteria</taxon>
        <taxon>Cardiobacteriales</taxon>
        <taxon>Cardiobacteriaceae</taxon>
        <taxon>Dichelobacter</taxon>
    </lineage>
</organism>
<evidence type="ECO:0000255" key="1">
    <source>
        <dbReference type="HAMAP-Rule" id="MF_00087"/>
    </source>
</evidence>